<feature type="chain" id="PRO_0000415632" description="L-alanine exporter AlaE">
    <location>
        <begin position="1"/>
        <end position="150"/>
    </location>
</feature>
<feature type="transmembrane region" description="Helical" evidence="1">
    <location>
        <begin position="17"/>
        <end position="37"/>
    </location>
</feature>
<feature type="transmembrane region" description="Helical" evidence="1">
    <location>
        <begin position="48"/>
        <end position="68"/>
    </location>
</feature>
<feature type="transmembrane region" description="Helical" evidence="1">
    <location>
        <begin position="86"/>
        <end position="106"/>
    </location>
</feature>
<feature type="transmembrane region" description="Helical" evidence="1">
    <location>
        <begin position="111"/>
        <end position="131"/>
    </location>
</feature>
<dbReference type="EMBL" id="CP000020">
    <property type="protein sequence ID" value="AAW85462.1"/>
    <property type="molecule type" value="Genomic_DNA"/>
</dbReference>
<dbReference type="RefSeq" id="WP_005418661.1">
    <property type="nucleotide sequence ID" value="NZ_CAWLES010000001.1"/>
</dbReference>
<dbReference type="RefSeq" id="YP_204350.1">
    <property type="nucleotide sequence ID" value="NC_006840.2"/>
</dbReference>
<dbReference type="STRING" id="312309.VF_0967"/>
<dbReference type="EnsemblBacteria" id="AAW85462">
    <property type="protein sequence ID" value="AAW85462"/>
    <property type="gene ID" value="VF_0967"/>
</dbReference>
<dbReference type="GeneID" id="54163636"/>
<dbReference type="KEGG" id="vfi:VF_0967"/>
<dbReference type="PATRIC" id="fig|312309.11.peg.964"/>
<dbReference type="eggNOG" id="ENOG502ZRFS">
    <property type="taxonomic scope" value="Bacteria"/>
</dbReference>
<dbReference type="HOGENOM" id="CLU_126493_0_0_6"/>
<dbReference type="OrthoDB" id="9006207at2"/>
<dbReference type="Proteomes" id="UP000000537">
    <property type="component" value="Chromosome I"/>
</dbReference>
<dbReference type="GO" id="GO:0005886">
    <property type="term" value="C:plasma membrane"/>
    <property type="evidence" value="ECO:0007669"/>
    <property type="project" value="UniProtKB-SubCell"/>
</dbReference>
<dbReference type="GO" id="GO:0034639">
    <property type="term" value="F:L-amino acid efflux transmembrane transporter activity"/>
    <property type="evidence" value="ECO:0007669"/>
    <property type="project" value="UniProtKB-UniRule"/>
</dbReference>
<dbReference type="GO" id="GO:0032973">
    <property type="term" value="P:amino acid export across plasma membrane"/>
    <property type="evidence" value="ECO:0007669"/>
    <property type="project" value="UniProtKB-UniRule"/>
</dbReference>
<dbReference type="HAMAP" id="MF_00914">
    <property type="entry name" value="L_Ala_exporter"/>
    <property type="match status" value="1"/>
</dbReference>
<dbReference type="InterPro" id="IPR010574">
    <property type="entry name" value="Ala_export_AlaE"/>
</dbReference>
<dbReference type="Pfam" id="PF06610">
    <property type="entry name" value="AlaE"/>
    <property type="match status" value="1"/>
</dbReference>
<keyword id="KW-0029">Amino-acid transport</keyword>
<keyword id="KW-0997">Cell inner membrane</keyword>
<keyword id="KW-1003">Cell membrane</keyword>
<keyword id="KW-0472">Membrane</keyword>
<keyword id="KW-1185">Reference proteome</keyword>
<keyword id="KW-0812">Transmembrane</keyword>
<keyword id="KW-1133">Transmembrane helix</keyword>
<keyword id="KW-0813">Transport</keyword>
<gene>
    <name evidence="1" type="primary">alaE</name>
    <name type="ordered locus">VF_0967</name>
</gene>
<organism>
    <name type="scientific">Aliivibrio fischeri (strain ATCC 700601 / ES114)</name>
    <name type="common">Vibrio fischeri</name>
    <dbReference type="NCBI Taxonomy" id="312309"/>
    <lineage>
        <taxon>Bacteria</taxon>
        <taxon>Pseudomonadati</taxon>
        <taxon>Pseudomonadota</taxon>
        <taxon>Gammaproteobacteria</taxon>
        <taxon>Vibrionales</taxon>
        <taxon>Vibrionaceae</taxon>
        <taxon>Aliivibrio</taxon>
    </lineage>
</organism>
<comment type="function">
    <text evidence="1">Exports L-alanine.</text>
</comment>
<comment type="subcellular location">
    <subcellularLocation>
        <location evidence="1">Cell inner membrane</location>
        <topology evidence="1">Multi-pass membrane protein</topology>
    </subcellularLocation>
</comment>
<comment type="similarity">
    <text evidence="1">Belongs to the AlaE exporter family.</text>
</comment>
<protein>
    <recommendedName>
        <fullName evidence="1">L-alanine exporter AlaE</fullName>
    </recommendedName>
</protein>
<accession>Q5E684</accession>
<reference key="1">
    <citation type="journal article" date="2005" name="Proc. Natl. Acad. Sci. U.S.A.">
        <title>Complete genome sequence of Vibrio fischeri: a symbiotic bacterium with pathogenic congeners.</title>
        <authorList>
            <person name="Ruby E.G."/>
            <person name="Urbanowski M."/>
            <person name="Campbell J."/>
            <person name="Dunn A."/>
            <person name="Faini M."/>
            <person name="Gunsalus R."/>
            <person name="Lostroh P."/>
            <person name="Lupp C."/>
            <person name="McCann J."/>
            <person name="Millikan D."/>
            <person name="Schaefer A."/>
            <person name="Stabb E."/>
            <person name="Stevens A."/>
            <person name="Visick K."/>
            <person name="Whistler C."/>
            <person name="Greenberg E.P."/>
        </authorList>
    </citation>
    <scope>NUCLEOTIDE SEQUENCE [LARGE SCALE GENOMIC DNA]</scope>
    <source>
        <strain>ATCC 700601 / ES114</strain>
    </source>
</reference>
<sequence length="150" mass="16513">MSKKGPFNIRNAAADTFAMVVFCFITGMFIEILISGMTFEQSLASRTLSIPVNIAIAWPYGVFRDFMLRQGARISPSKFMKNIADLVAYVTFQSPAYAMILLVVGATPEQIITAVSSNVVVSCVMGVFYGYFLDACRKAFKVPGYYTPQA</sequence>
<name>ALAE_ALIF1</name>
<proteinExistence type="inferred from homology"/>
<evidence type="ECO:0000255" key="1">
    <source>
        <dbReference type="HAMAP-Rule" id="MF_00914"/>
    </source>
</evidence>